<reference key="1">
    <citation type="journal article" date="2009" name="Appl. Environ. Microbiol.">
        <title>Three genomes from the phylum Acidobacteria provide insight into the lifestyles of these microorganisms in soils.</title>
        <authorList>
            <person name="Ward N.L."/>
            <person name="Challacombe J.F."/>
            <person name="Janssen P.H."/>
            <person name="Henrissat B."/>
            <person name="Coutinho P.M."/>
            <person name="Wu M."/>
            <person name="Xie G."/>
            <person name="Haft D.H."/>
            <person name="Sait M."/>
            <person name="Badger J."/>
            <person name="Barabote R.D."/>
            <person name="Bradley B."/>
            <person name="Brettin T.S."/>
            <person name="Brinkac L.M."/>
            <person name="Bruce D."/>
            <person name="Creasy T."/>
            <person name="Daugherty S.C."/>
            <person name="Davidsen T.M."/>
            <person name="DeBoy R.T."/>
            <person name="Detter J.C."/>
            <person name="Dodson R.J."/>
            <person name="Durkin A.S."/>
            <person name="Ganapathy A."/>
            <person name="Gwinn-Giglio M."/>
            <person name="Han C.S."/>
            <person name="Khouri H."/>
            <person name="Kiss H."/>
            <person name="Kothari S.P."/>
            <person name="Madupu R."/>
            <person name="Nelson K.E."/>
            <person name="Nelson W.C."/>
            <person name="Paulsen I."/>
            <person name="Penn K."/>
            <person name="Ren Q."/>
            <person name="Rosovitz M.J."/>
            <person name="Selengut J.D."/>
            <person name="Shrivastava S."/>
            <person name="Sullivan S.A."/>
            <person name="Tapia R."/>
            <person name="Thompson L.S."/>
            <person name="Watkins K.L."/>
            <person name="Yang Q."/>
            <person name="Yu C."/>
            <person name="Zafar N."/>
            <person name="Zhou L."/>
            <person name="Kuske C.R."/>
        </authorList>
    </citation>
    <scope>NUCLEOTIDE SEQUENCE [LARGE SCALE GENOMIC DNA]</scope>
    <source>
        <strain>Ellin6076</strain>
    </source>
</reference>
<protein>
    <recommendedName>
        <fullName evidence="1">DNA-directed RNA polymerase subunit beta'</fullName>
        <shortName evidence="1">RNAP subunit beta'</shortName>
        <ecNumber evidence="1">2.7.7.6</ecNumber>
    </recommendedName>
    <alternativeName>
        <fullName evidence="1">RNA polymerase subunit beta'</fullName>
    </alternativeName>
    <alternativeName>
        <fullName evidence="1">Transcriptase subunit beta'</fullName>
    </alternativeName>
</protein>
<gene>
    <name evidence="1" type="primary">rpoC</name>
    <name type="ordered locus">Acid_5456</name>
</gene>
<evidence type="ECO:0000255" key="1">
    <source>
        <dbReference type="HAMAP-Rule" id="MF_01322"/>
    </source>
</evidence>
<name>RPOC_SOLUE</name>
<feature type="chain" id="PRO_0000353438" description="DNA-directed RNA polymerase subunit beta'">
    <location>
        <begin position="1"/>
        <end position="1403"/>
    </location>
</feature>
<feature type="binding site" evidence="1">
    <location>
        <position position="68"/>
    </location>
    <ligand>
        <name>Zn(2+)</name>
        <dbReference type="ChEBI" id="CHEBI:29105"/>
        <label>1</label>
    </ligand>
</feature>
<feature type="binding site" evidence="1">
    <location>
        <position position="70"/>
    </location>
    <ligand>
        <name>Zn(2+)</name>
        <dbReference type="ChEBI" id="CHEBI:29105"/>
        <label>1</label>
    </ligand>
</feature>
<feature type="binding site" evidence="1">
    <location>
        <position position="83"/>
    </location>
    <ligand>
        <name>Zn(2+)</name>
        <dbReference type="ChEBI" id="CHEBI:29105"/>
        <label>1</label>
    </ligand>
</feature>
<feature type="binding site" evidence="1">
    <location>
        <position position="86"/>
    </location>
    <ligand>
        <name>Zn(2+)</name>
        <dbReference type="ChEBI" id="CHEBI:29105"/>
        <label>1</label>
    </ligand>
</feature>
<feature type="binding site" evidence="1">
    <location>
        <position position="459"/>
    </location>
    <ligand>
        <name>Mg(2+)</name>
        <dbReference type="ChEBI" id="CHEBI:18420"/>
    </ligand>
</feature>
<feature type="binding site" evidence="1">
    <location>
        <position position="461"/>
    </location>
    <ligand>
        <name>Mg(2+)</name>
        <dbReference type="ChEBI" id="CHEBI:18420"/>
    </ligand>
</feature>
<feature type="binding site" evidence="1">
    <location>
        <position position="463"/>
    </location>
    <ligand>
        <name>Mg(2+)</name>
        <dbReference type="ChEBI" id="CHEBI:18420"/>
    </ligand>
</feature>
<feature type="binding site" evidence="1">
    <location>
        <position position="814"/>
    </location>
    <ligand>
        <name>Zn(2+)</name>
        <dbReference type="ChEBI" id="CHEBI:29105"/>
        <label>2</label>
    </ligand>
</feature>
<feature type="binding site" evidence="1">
    <location>
        <position position="887"/>
    </location>
    <ligand>
        <name>Zn(2+)</name>
        <dbReference type="ChEBI" id="CHEBI:29105"/>
        <label>2</label>
    </ligand>
</feature>
<feature type="binding site" evidence="1">
    <location>
        <position position="894"/>
    </location>
    <ligand>
        <name>Zn(2+)</name>
        <dbReference type="ChEBI" id="CHEBI:29105"/>
        <label>2</label>
    </ligand>
</feature>
<feature type="binding site" evidence="1">
    <location>
        <position position="897"/>
    </location>
    <ligand>
        <name>Zn(2+)</name>
        <dbReference type="ChEBI" id="CHEBI:29105"/>
        <label>2</label>
    </ligand>
</feature>
<organism>
    <name type="scientific">Solibacter usitatus (strain Ellin6076)</name>
    <dbReference type="NCBI Taxonomy" id="234267"/>
    <lineage>
        <taxon>Bacteria</taxon>
        <taxon>Pseudomonadati</taxon>
        <taxon>Acidobacteriota</taxon>
        <taxon>Terriglobia</taxon>
        <taxon>Bryobacterales</taxon>
        <taxon>Solibacteraceae</taxon>
        <taxon>Candidatus Solibacter</taxon>
    </lineage>
</organism>
<accession>Q01VB2</accession>
<dbReference type="EC" id="2.7.7.6" evidence="1"/>
<dbReference type="EMBL" id="CP000473">
    <property type="protein sequence ID" value="ABJ86403.1"/>
    <property type="molecule type" value="Genomic_DNA"/>
</dbReference>
<dbReference type="SMR" id="Q01VB2"/>
<dbReference type="FunCoup" id="Q01VB2">
    <property type="interactions" value="624"/>
</dbReference>
<dbReference type="STRING" id="234267.Acid_5456"/>
<dbReference type="KEGG" id="sus:Acid_5456"/>
<dbReference type="eggNOG" id="COG0086">
    <property type="taxonomic scope" value="Bacteria"/>
</dbReference>
<dbReference type="HOGENOM" id="CLU_000524_3_1_0"/>
<dbReference type="InParanoid" id="Q01VB2"/>
<dbReference type="GO" id="GO:0000428">
    <property type="term" value="C:DNA-directed RNA polymerase complex"/>
    <property type="evidence" value="ECO:0007669"/>
    <property type="project" value="UniProtKB-KW"/>
</dbReference>
<dbReference type="GO" id="GO:0003677">
    <property type="term" value="F:DNA binding"/>
    <property type="evidence" value="ECO:0007669"/>
    <property type="project" value="UniProtKB-UniRule"/>
</dbReference>
<dbReference type="GO" id="GO:0003899">
    <property type="term" value="F:DNA-directed RNA polymerase activity"/>
    <property type="evidence" value="ECO:0007669"/>
    <property type="project" value="UniProtKB-UniRule"/>
</dbReference>
<dbReference type="GO" id="GO:0000287">
    <property type="term" value="F:magnesium ion binding"/>
    <property type="evidence" value="ECO:0007669"/>
    <property type="project" value="UniProtKB-UniRule"/>
</dbReference>
<dbReference type="GO" id="GO:0008270">
    <property type="term" value="F:zinc ion binding"/>
    <property type="evidence" value="ECO:0007669"/>
    <property type="project" value="UniProtKB-UniRule"/>
</dbReference>
<dbReference type="GO" id="GO:0006351">
    <property type="term" value="P:DNA-templated transcription"/>
    <property type="evidence" value="ECO:0007669"/>
    <property type="project" value="UniProtKB-UniRule"/>
</dbReference>
<dbReference type="CDD" id="cd02655">
    <property type="entry name" value="RNAP_beta'_C"/>
    <property type="match status" value="1"/>
</dbReference>
<dbReference type="CDD" id="cd01609">
    <property type="entry name" value="RNAP_beta'_N"/>
    <property type="match status" value="1"/>
</dbReference>
<dbReference type="FunFam" id="1.10.132.30:FF:000003">
    <property type="entry name" value="DNA-directed RNA polymerase subunit beta"/>
    <property type="match status" value="1"/>
</dbReference>
<dbReference type="FunFam" id="1.10.150.390:FF:000002">
    <property type="entry name" value="DNA-directed RNA polymerase subunit beta"/>
    <property type="match status" value="1"/>
</dbReference>
<dbReference type="Gene3D" id="1.10.132.30">
    <property type="match status" value="1"/>
</dbReference>
<dbReference type="Gene3D" id="1.10.150.390">
    <property type="match status" value="1"/>
</dbReference>
<dbReference type="Gene3D" id="1.10.1790.20">
    <property type="match status" value="1"/>
</dbReference>
<dbReference type="Gene3D" id="1.10.40.90">
    <property type="match status" value="1"/>
</dbReference>
<dbReference type="Gene3D" id="2.40.40.20">
    <property type="match status" value="1"/>
</dbReference>
<dbReference type="Gene3D" id="2.40.50.100">
    <property type="match status" value="3"/>
</dbReference>
<dbReference type="Gene3D" id="4.10.860.120">
    <property type="entry name" value="RNA polymerase II, clamp domain"/>
    <property type="match status" value="1"/>
</dbReference>
<dbReference type="Gene3D" id="1.10.274.100">
    <property type="entry name" value="RNA polymerase Rpb1, domain 3"/>
    <property type="match status" value="1"/>
</dbReference>
<dbReference type="HAMAP" id="MF_01322">
    <property type="entry name" value="RNApol_bact_RpoC"/>
    <property type="match status" value="1"/>
</dbReference>
<dbReference type="InterPro" id="IPR045867">
    <property type="entry name" value="DNA-dir_RpoC_beta_prime"/>
</dbReference>
<dbReference type="InterPro" id="IPR012754">
    <property type="entry name" value="DNA-dir_RpoC_beta_prime_bact"/>
</dbReference>
<dbReference type="InterPro" id="IPR000722">
    <property type="entry name" value="RNA_pol_asu"/>
</dbReference>
<dbReference type="InterPro" id="IPR006592">
    <property type="entry name" value="RNA_pol_N"/>
</dbReference>
<dbReference type="InterPro" id="IPR007080">
    <property type="entry name" value="RNA_pol_Rpb1_1"/>
</dbReference>
<dbReference type="InterPro" id="IPR007066">
    <property type="entry name" value="RNA_pol_Rpb1_3"/>
</dbReference>
<dbReference type="InterPro" id="IPR042102">
    <property type="entry name" value="RNA_pol_Rpb1_3_sf"/>
</dbReference>
<dbReference type="InterPro" id="IPR007083">
    <property type="entry name" value="RNA_pol_Rpb1_4"/>
</dbReference>
<dbReference type="InterPro" id="IPR007081">
    <property type="entry name" value="RNA_pol_Rpb1_5"/>
</dbReference>
<dbReference type="InterPro" id="IPR044893">
    <property type="entry name" value="RNA_pol_Rpb1_clamp_domain"/>
</dbReference>
<dbReference type="InterPro" id="IPR038120">
    <property type="entry name" value="Rpb1_funnel_sf"/>
</dbReference>
<dbReference type="NCBIfam" id="TIGR02386">
    <property type="entry name" value="rpoC_TIGR"/>
    <property type="match status" value="1"/>
</dbReference>
<dbReference type="PANTHER" id="PTHR19376">
    <property type="entry name" value="DNA-DIRECTED RNA POLYMERASE"/>
    <property type="match status" value="1"/>
</dbReference>
<dbReference type="PANTHER" id="PTHR19376:SF54">
    <property type="entry name" value="DNA-DIRECTED RNA POLYMERASE SUBUNIT BETA"/>
    <property type="match status" value="1"/>
</dbReference>
<dbReference type="Pfam" id="PF04997">
    <property type="entry name" value="RNA_pol_Rpb1_1"/>
    <property type="match status" value="1"/>
</dbReference>
<dbReference type="Pfam" id="PF00623">
    <property type="entry name" value="RNA_pol_Rpb1_2"/>
    <property type="match status" value="2"/>
</dbReference>
<dbReference type="Pfam" id="PF04983">
    <property type="entry name" value="RNA_pol_Rpb1_3"/>
    <property type="match status" value="1"/>
</dbReference>
<dbReference type="Pfam" id="PF05000">
    <property type="entry name" value="RNA_pol_Rpb1_4"/>
    <property type="match status" value="1"/>
</dbReference>
<dbReference type="Pfam" id="PF04998">
    <property type="entry name" value="RNA_pol_Rpb1_5"/>
    <property type="match status" value="1"/>
</dbReference>
<dbReference type="SMART" id="SM00663">
    <property type="entry name" value="RPOLA_N"/>
    <property type="match status" value="1"/>
</dbReference>
<dbReference type="SUPFAM" id="SSF64484">
    <property type="entry name" value="beta and beta-prime subunits of DNA dependent RNA-polymerase"/>
    <property type="match status" value="1"/>
</dbReference>
<keyword id="KW-0240">DNA-directed RNA polymerase</keyword>
<keyword id="KW-0460">Magnesium</keyword>
<keyword id="KW-0479">Metal-binding</keyword>
<keyword id="KW-0548">Nucleotidyltransferase</keyword>
<keyword id="KW-0804">Transcription</keyword>
<keyword id="KW-0808">Transferase</keyword>
<keyword id="KW-0862">Zinc</keyword>
<comment type="function">
    <text evidence="1">DNA-dependent RNA polymerase catalyzes the transcription of DNA into RNA using the four ribonucleoside triphosphates as substrates.</text>
</comment>
<comment type="catalytic activity">
    <reaction evidence="1">
        <text>RNA(n) + a ribonucleoside 5'-triphosphate = RNA(n+1) + diphosphate</text>
        <dbReference type="Rhea" id="RHEA:21248"/>
        <dbReference type="Rhea" id="RHEA-COMP:14527"/>
        <dbReference type="Rhea" id="RHEA-COMP:17342"/>
        <dbReference type="ChEBI" id="CHEBI:33019"/>
        <dbReference type="ChEBI" id="CHEBI:61557"/>
        <dbReference type="ChEBI" id="CHEBI:140395"/>
        <dbReference type="EC" id="2.7.7.6"/>
    </reaction>
</comment>
<comment type="cofactor">
    <cofactor evidence="1">
        <name>Mg(2+)</name>
        <dbReference type="ChEBI" id="CHEBI:18420"/>
    </cofactor>
    <text evidence="1">Binds 1 Mg(2+) ion per subunit.</text>
</comment>
<comment type="cofactor">
    <cofactor evidence="1">
        <name>Zn(2+)</name>
        <dbReference type="ChEBI" id="CHEBI:29105"/>
    </cofactor>
    <text evidence="1">Binds 2 Zn(2+) ions per subunit.</text>
</comment>
<comment type="subunit">
    <text evidence="1">The RNAP catalytic core consists of 2 alpha, 1 beta, 1 beta' and 1 omega subunit. When a sigma factor is associated with the core the holoenzyme is formed, which can initiate transcription.</text>
</comment>
<comment type="similarity">
    <text evidence="1">Belongs to the RNA polymerase beta' chain family.</text>
</comment>
<sequence length="1403" mass="156896">MRSSPYDRANLIADFDSIRISLASPEKIRSWSHGEVTKPETINYRTFKPERDGLFCARIFGPTQDWECLCGKYKRMKHRGVICDKCGVEVTLARVRRERLGHIELASPCSHVWFFKGLPSRIGHLLDITLRELERVLYFEAYVIVDPGDGTGLSSGEVITDERKRQLDQEFPGKFIAMMGAEGIKELLKKIDVESLSEEIREKMKTEQSQQKKLKHAKRLRVVESFRKSGNKPEWMILDVIPVIPPELRPLVPLDGGRFATSDLNDLYRRVINRNNRLKKLIELHAPDVIVRNEKRMLQEAVDALFDNGRRGRVLRGANNRPLKSLSDTLKGKQGRFRQNLLGKRVDYSGRSVIVVGPDLKLHQCGLPKKMALELFKPFIYHRLEQRGHCTTIKQAKELVEQQDPVVWDILEEVIKDHPIMLNRAPTLHRLGIQAFEPVLVEGKAIKIHPLVCTAFNADFDGDQMAVHIPLSPEAQIEASTLMLSANNILSPAHGGPITIPTQDMVLGCYYLTKSRPGAKGEGRTFASTDDVLIALEMGEVETLTPIKLRYTGKVIDLVHAFDTQNILHTEPIEFIKQYMDTTVGRVILNDNLPQDMPYINGLLKKKGLAQLVQYCYLKFGLHVTVHMLDEIKSLGFLYATRAGISIGIDDMVVPSEKAGLVRDAEKEVVLVENQYQDGAITHGERYNKIIEIWSKVTERVSDEMFTAMEEDDRTGRYLNPIYIMADSGARGSKQQIRQLSGMRGLMAKPSGEIIETPITANFREGLNVLQYFISTHGARKGLADTALKTADSGYLTRRLVDVAQDVIISENDCGTTEGIYVEPIIESGEIIEALRDRIVGRVALEDQKDYEGNVIVGVNQEITEDLAAAIQAAGIERVKIRSVLTCESKRGVCVACYGRNLATGRLVERGEAVGVIAAQSIGEPGTQLTMRTFHIGGTATRINEQSKQDAKSDGFARYIGIQTVRSKVGELIAMNRNGIMAVVDDKGREKERYPAVYGARVLVEDGAPVKSNQVLLEWDPYTFSILTEVSGVVHFKDLIDGLTMQERLDEVTGMSQLVVIDSPDEKRQPMIQVRPEGATGRGSEAKKYLMPTHAHLMVRDGEELHAGDVLAKIPRETTKTKDITGGLPRVVELFEARKPRETAIIAEINGTVKYGEVTKGQRKIYVEGEDGEKREYALPRGVHINVQEGEKVKAGEPLMDGPRDPHDILAVLGEKELQKYLVNEIQEVYRLQGVNINDKHLETISRQMMRWVKVEDIGDTEFLPEEIVDKFKFRTENNKVLEAGGRPAQGKAMLLGITKASLSTDSFISAASFQETTRVLTEAAINGKVDYLRGLKENVIMGRLVPAGTGMEYYRQVKIAGEDVVEEPVAEPLDIIPGYDEETRLQYAGGLPEDTGEESLAE</sequence>
<proteinExistence type="inferred from homology"/>